<comment type="function">
    <text evidence="1">This protein binds to 23S rRNA in the presence of protein L20.</text>
</comment>
<comment type="subunit">
    <text evidence="1">Part of the 50S ribosomal subunit. Contacts protein L20.</text>
</comment>
<comment type="similarity">
    <text evidence="1">Belongs to the bacterial ribosomal protein bL21 family.</text>
</comment>
<proteinExistence type="inferred from homology"/>
<keyword id="KW-0687">Ribonucleoprotein</keyword>
<keyword id="KW-0689">Ribosomal protein</keyword>
<keyword id="KW-0694">RNA-binding</keyword>
<keyword id="KW-0699">rRNA-binding</keyword>
<organism>
    <name type="scientific">Campylobacter jejuni (strain RM1221)</name>
    <dbReference type="NCBI Taxonomy" id="195099"/>
    <lineage>
        <taxon>Bacteria</taxon>
        <taxon>Pseudomonadati</taxon>
        <taxon>Campylobacterota</taxon>
        <taxon>Epsilonproteobacteria</taxon>
        <taxon>Campylobacterales</taxon>
        <taxon>Campylobacteraceae</taxon>
        <taxon>Campylobacter</taxon>
    </lineage>
</organism>
<evidence type="ECO:0000255" key="1">
    <source>
        <dbReference type="HAMAP-Rule" id="MF_01363"/>
    </source>
</evidence>
<evidence type="ECO:0000305" key="2"/>
<sequence length="102" mass="11609">MYAIIKHSGKQYKVSVGDELKLDHFEAESKASIEVSEVLAINDKELKVGAPFVAGAKVVLEVINHGKDKKVVIYKKRRRKDSKLKRGFRRQFTRVVVKDIKA</sequence>
<protein>
    <recommendedName>
        <fullName evidence="1">Large ribosomal subunit protein bL21</fullName>
    </recommendedName>
    <alternativeName>
        <fullName evidence="2">50S ribosomal protein L21</fullName>
    </alternativeName>
</protein>
<dbReference type="EMBL" id="CP000025">
    <property type="protein sequence ID" value="AAW34684.1"/>
    <property type="molecule type" value="Genomic_DNA"/>
</dbReference>
<dbReference type="RefSeq" id="WP_002778820.1">
    <property type="nucleotide sequence ID" value="NC_003912.7"/>
</dbReference>
<dbReference type="SMR" id="Q5HX72"/>
<dbReference type="KEGG" id="cjr:CJE0089"/>
<dbReference type="HOGENOM" id="CLU_061463_3_1_7"/>
<dbReference type="GO" id="GO:0005737">
    <property type="term" value="C:cytoplasm"/>
    <property type="evidence" value="ECO:0007669"/>
    <property type="project" value="UniProtKB-ARBA"/>
</dbReference>
<dbReference type="GO" id="GO:1990904">
    <property type="term" value="C:ribonucleoprotein complex"/>
    <property type="evidence" value="ECO:0007669"/>
    <property type="project" value="UniProtKB-KW"/>
</dbReference>
<dbReference type="GO" id="GO:0005840">
    <property type="term" value="C:ribosome"/>
    <property type="evidence" value="ECO:0007669"/>
    <property type="project" value="UniProtKB-KW"/>
</dbReference>
<dbReference type="GO" id="GO:0019843">
    <property type="term" value="F:rRNA binding"/>
    <property type="evidence" value="ECO:0007669"/>
    <property type="project" value="UniProtKB-UniRule"/>
</dbReference>
<dbReference type="GO" id="GO:0003735">
    <property type="term" value="F:structural constituent of ribosome"/>
    <property type="evidence" value="ECO:0007669"/>
    <property type="project" value="InterPro"/>
</dbReference>
<dbReference type="GO" id="GO:0006412">
    <property type="term" value="P:translation"/>
    <property type="evidence" value="ECO:0007669"/>
    <property type="project" value="UniProtKB-UniRule"/>
</dbReference>
<dbReference type="HAMAP" id="MF_01363">
    <property type="entry name" value="Ribosomal_bL21"/>
    <property type="match status" value="1"/>
</dbReference>
<dbReference type="InterPro" id="IPR028909">
    <property type="entry name" value="bL21-like"/>
</dbReference>
<dbReference type="InterPro" id="IPR036164">
    <property type="entry name" value="bL21-like_sf"/>
</dbReference>
<dbReference type="InterPro" id="IPR001787">
    <property type="entry name" value="Ribosomal_bL21"/>
</dbReference>
<dbReference type="InterPro" id="IPR018258">
    <property type="entry name" value="Ribosomal_bL21_CS"/>
</dbReference>
<dbReference type="NCBIfam" id="TIGR00061">
    <property type="entry name" value="L21"/>
    <property type="match status" value="1"/>
</dbReference>
<dbReference type="PANTHER" id="PTHR21349">
    <property type="entry name" value="50S RIBOSOMAL PROTEIN L21"/>
    <property type="match status" value="1"/>
</dbReference>
<dbReference type="PANTHER" id="PTHR21349:SF0">
    <property type="entry name" value="LARGE RIBOSOMAL SUBUNIT PROTEIN BL21M"/>
    <property type="match status" value="1"/>
</dbReference>
<dbReference type="Pfam" id="PF00829">
    <property type="entry name" value="Ribosomal_L21p"/>
    <property type="match status" value="1"/>
</dbReference>
<dbReference type="SUPFAM" id="SSF141091">
    <property type="entry name" value="L21p-like"/>
    <property type="match status" value="1"/>
</dbReference>
<dbReference type="PROSITE" id="PS01169">
    <property type="entry name" value="RIBOSOMAL_L21"/>
    <property type="match status" value="1"/>
</dbReference>
<gene>
    <name evidence="1" type="primary">rplU</name>
    <name type="ordered locus">CJE0089</name>
</gene>
<feature type="chain" id="PRO_0000270646" description="Large ribosomal subunit protein bL21">
    <location>
        <begin position="1"/>
        <end position="102"/>
    </location>
</feature>
<name>RL21_CAMJR</name>
<accession>Q5HX72</accession>
<reference key="1">
    <citation type="journal article" date="2005" name="PLoS Biol.">
        <title>Major structural differences and novel potential virulence mechanisms from the genomes of multiple Campylobacter species.</title>
        <authorList>
            <person name="Fouts D.E."/>
            <person name="Mongodin E.F."/>
            <person name="Mandrell R.E."/>
            <person name="Miller W.G."/>
            <person name="Rasko D.A."/>
            <person name="Ravel J."/>
            <person name="Brinkac L.M."/>
            <person name="DeBoy R.T."/>
            <person name="Parker C.T."/>
            <person name="Daugherty S.C."/>
            <person name="Dodson R.J."/>
            <person name="Durkin A.S."/>
            <person name="Madupu R."/>
            <person name="Sullivan S.A."/>
            <person name="Shetty J.U."/>
            <person name="Ayodeji M.A."/>
            <person name="Shvartsbeyn A."/>
            <person name="Schatz M.C."/>
            <person name="Badger J.H."/>
            <person name="Fraser C.M."/>
            <person name="Nelson K.E."/>
        </authorList>
    </citation>
    <scope>NUCLEOTIDE SEQUENCE [LARGE SCALE GENOMIC DNA]</scope>
    <source>
        <strain>RM1221</strain>
    </source>
</reference>